<feature type="chain" id="PRO_0000072624" description="Tol-Pal system protein TolA">
    <location>
        <begin position="1"/>
        <end position="347"/>
    </location>
</feature>
<feature type="topological domain" description="Cytoplasmic" evidence="1">
    <location>
        <begin position="1"/>
        <end position="16"/>
    </location>
</feature>
<feature type="transmembrane region" description="Helical" evidence="2">
    <location>
        <begin position="17"/>
        <end position="37"/>
    </location>
</feature>
<feature type="topological domain" description="Periplasmic" evidence="1">
    <location>
        <begin position="38"/>
        <end position="347"/>
    </location>
</feature>
<feature type="region of interest" description="Disordered" evidence="3">
    <location>
        <begin position="112"/>
        <end position="219"/>
    </location>
</feature>
<feature type="compositionally biased region" description="Basic and acidic residues" evidence="3">
    <location>
        <begin position="112"/>
        <end position="206"/>
    </location>
</feature>
<feature type="helix" evidence="5">
    <location>
        <begin position="228"/>
        <end position="265"/>
    </location>
</feature>
<feature type="strand" evidence="5">
    <location>
        <begin position="278"/>
        <end position="284"/>
    </location>
</feature>
<feature type="strand" evidence="5">
    <location>
        <begin position="288"/>
        <end position="297"/>
    </location>
</feature>
<feature type="helix" evidence="5">
    <location>
        <begin position="302"/>
        <end position="315"/>
    </location>
</feature>
<feature type="helix" evidence="5">
    <location>
        <begin position="319"/>
        <end position="323"/>
    </location>
</feature>
<feature type="helix" evidence="5">
    <location>
        <begin position="326"/>
        <end position="332"/>
    </location>
</feature>
<feature type="strand" evidence="5">
    <location>
        <begin position="334"/>
        <end position="340"/>
    </location>
</feature>
<feature type="helix" evidence="5">
    <location>
        <begin position="342"/>
        <end position="347"/>
    </location>
</feature>
<name>TOLA_PSEAE</name>
<comment type="function">
    <text evidence="1">Part of the Tol-Pal system, which plays a role in outer membrane invagination during cell division and is important for maintaining outer membrane integrity.</text>
</comment>
<comment type="subunit">
    <text evidence="1">The Tol-Pal system is composed of five core proteins: the inner membrane proteins TolA, TolQ and TolR, the periplasmic protein TolB and the outer membrane protein Pal. They form a network linking the inner and outer membranes and the peptidoglycan layer.</text>
</comment>
<comment type="subcellular location">
    <subcellularLocation>
        <location evidence="1">Cell inner membrane</location>
        <topology evidence="1">Single-pass membrane protein</topology>
    </subcellularLocation>
</comment>
<comment type="similarity">
    <text evidence="4">Belongs to the TolA family.</text>
</comment>
<dbReference type="EMBL" id="U39558">
    <property type="protein sequence ID" value="AAC44660.2"/>
    <property type="molecule type" value="Genomic_DNA"/>
</dbReference>
<dbReference type="EMBL" id="AE004091">
    <property type="protein sequence ID" value="AAG04360.1"/>
    <property type="molecule type" value="Genomic_DNA"/>
</dbReference>
<dbReference type="PIR" id="E83525">
    <property type="entry name" value="E83525"/>
</dbReference>
<dbReference type="RefSeq" id="NP_249662.1">
    <property type="nucleotide sequence ID" value="NC_002516.2"/>
</dbReference>
<dbReference type="RefSeq" id="WP_003112574.1">
    <property type="nucleotide sequence ID" value="NZ_QZGE01000007.1"/>
</dbReference>
<dbReference type="PDB" id="1LR0">
    <property type="method" value="X-ray"/>
    <property type="resolution" value="1.91 A"/>
    <property type="chains" value="A=226-347"/>
</dbReference>
<dbReference type="PDB" id="6S3W">
    <property type="method" value="NMR"/>
    <property type="chains" value="A=226-347"/>
</dbReference>
<dbReference type="PDBsum" id="1LR0"/>
<dbReference type="PDBsum" id="6S3W"/>
<dbReference type="BMRB" id="P50600"/>
<dbReference type="SMR" id="P50600"/>
<dbReference type="STRING" id="208964.PA0971"/>
<dbReference type="PaxDb" id="208964-PA0971"/>
<dbReference type="GeneID" id="882033"/>
<dbReference type="KEGG" id="pae:PA0971"/>
<dbReference type="PATRIC" id="fig|208964.12.peg.1009"/>
<dbReference type="PseudoCAP" id="PA0971"/>
<dbReference type="HOGENOM" id="CLU_038804_1_0_6"/>
<dbReference type="InParanoid" id="P50600"/>
<dbReference type="OrthoDB" id="9779830at2"/>
<dbReference type="PhylomeDB" id="P50600"/>
<dbReference type="BioCyc" id="PAER208964:G1FZ6-992-MONOMER"/>
<dbReference type="EvolutionaryTrace" id="P50600"/>
<dbReference type="Proteomes" id="UP000002438">
    <property type="component" value="Chromosome"/>
</dbReference>
<dbReference type="GO" id="GO:0005886">
    <property type="term" value="C:plasma membrane"/>
    <property type="evidence" value="ECO:0007669"/>
    <property type="project" value="UniProtKB-SubCell"/>
</dbReference>
<dbReference type="GO" id="GO:0019534">
    <property type="term" value="F:toxin transmembrane transporter activity"/>
    <property type="evidence" value="ECO:0007669"/>
    <property type="project" value="InterPro"/>
</dbReference>
<dbReference type="GO" id="GO:0043213">
    <property type="term" value="P:bacteriocin transport"/>
    <property type="evidence" value="ECO:0007669"/>
    <property type="project" value="InterPro"/>
</dbReference>
<dbReference type="GO" id="GO:0051301">
    <property type="term" value="P:cell division"/>
    <property type="evidence" value="ECO:0007669"/>
    <property type="project" value="UniProtKB-KW"/>
</dbReference>
<dbReference type="Gene3D" id="3.30.1150.10">
    <property type="match status" value="1"/>
</dbReference>
<dbReference type="InterPro" id="IPR014161">
    <property type="entry name" value="Tol-Pal_TolA"/>
</dbReference>
<dbReference type="InterPro" id="IPR006260">
    <property type="entry name" value="TonB/TolA_C"/>
</dbReference>
<dbReference type="NCBIfam" id="TIGR02794">
    <property type="entry name" value="tolA_full"/>
    <property type="match status" value="1"/>
</dbReference>
<dbReference type="NCBIfam" id="TIGR01352">
    <property type="entry name" value="tonB_Cterm"/>
    <property type="match status" value="1"/>
</dbReference>
<dbReference type="Pfam" id="PF13103">
    <property type="entry name" value="TonB_2"/>
    <property type="match status" value="1"/>
</dbReference>
<dbReference type="SUPFAM" id="SSF74653">
    <property type="entry name" value="TolA/TonB C-terminal domain"/>
    <property type="match status" value="1"/>
</dbReference>
<evidence type="ECO:0000250" key="1">
    <source>
        <dbReference type="UniProtKB" id="P19934"/>
    </source>
</evidence>
<evidence type="ECO:0000255" key="2"/>
<evidence type="ECO:0000256" key="3">
    <source>
        <dbReference type="SAM" id="MobiDB-lite"/>
    </source>
</evidence>
<evidence type="ECO:0000305" key="4"/>
<evidence type="ECO:0007829" key="5">
    <source>
        <dbReference type="PDB" id="1LR0"/>
    </source>
</evidence>
<reference key="1">
    <citation type="journal article" date="1996" name="J. Bacteriol.">
        <title>Identification and characterization of the tolQRA genes of Pseudomonas aeruginosa.</title>
        <authorList>
            <person name="Dennis J.J."/>
            <person name="Lafontaine E.R."/>
            <person name="Sokol P.A."/>
        </authorList>
    </citation>
    <scope>NUCLEOTIDE SEQUENCE [GENOMIC DNA]</scope>
    <source>
        <strain>PAO</strain>
    </source>
</reference>
<reference key="2">
    <citation type="submission" date="1999-08" db="EMBL/GenBank/DDBJ databases">
        <authorList>
            <person name="Duan K."/>
            <person name="Sokol P.A."/>
        </authorList>
    </citation>
    <scope>SEQUENCE REVISION TO N-TERMINUS</scope>
</reference>
<reference key="3">
    <citation type="journal article" date="2000" name="Nature">
        <title>Complete genome sequence of Pseudomonas aeruginosa PAO1, an opportunistic pathogen.</title>
        <authorList>
            <person name="Stover C.K."/>
            <person name="Pham X.-Q.T."/>
            <person name="Erwin A.L."/>
            <person name="Mizoguchi S.D."/>
            <person name="Warrener P."/>
            <person name="Hickey M.J."/>
            <person name="Brinkman F.S.L."/>
            <person name="Hufnagle W.O."/>
            <person name="Kowalik D.J."/>
            <person name="Lagrou M."/>
            <person name="Garber R.L."/>
            <person name="Goltry L."/>
            <person name="Tolentino E."/>
            <person name="Westbrock-Wadman S."/>
            <person name="Yuan Y."/>
            <person name="Brody L.L."/>
            <person name="Coulter S.N."/>
            <person name="Folger K.R."/>
            <person name="Kas A."/>
            <person name="Larbig K."/>
            <person name="Lim R.M."/>
            <person name="Smith K.A."/>
            <person name="Spencer D.H."/>
            <person name="Wong G.K.-S."/>
            <person name="Wu Z."/>
            <person name="Paulsen I.T."/>
            <person name="Reizer J."/>
            <person name="Saier M.H. Jr."/>
            <person name="Hancock R.E.W."/>
            <person name="Lory S."/>
            <person name="Olson M.V."/>
        </authorList>
    </citation>
    <scope>NUCLEOTIDE SEQUENCE [LARGE SCALE GENOMIC DNA]</scope>
    <source>
        <strain>ATCC 15692 / DSM 22644 / CIP 104116 / JCM 14847 / LMG 12228 / 1C / PRS 101 / PAO1</strain>
    </source>
</reference>
<protein>
    <recommendedName>
        <fullName evidence="4">Tol-Pal system protein TolA</fullName>
    </recommendedName>
</protein>
<proteinExistence type="evidence at protein level"/>
<accession>P50600</accession>
<keyword id="KW-0002">3D-structure</keyword>
<keyword id="KW-0131">Cell cycle</keyword>
<keyword id="KW-0132">Cell division</keyword>
<keyword id="KW-0997">Cell inner membrane</keyword>
<keyword id="KW-1003">Cell membrane</keyword>
<keyword id="KW-0472">Membrane</keyword>
<keyword id="KW-1185">Reference proteome</keyword>
<keyword id="KW-0677">Repeat</keyword>
<keyword id="KW-0812">Transmembrane</keyword>
<keyword id="KW-1133">Transmembrane helix</keyword>
<organism>
    <name type="scientific">Pseudomonas aeruginosa (strain ATCC 15692 / DSM 22644 / CIP 104116 / JCM 14847 / LMG 12228 / 1C / PRS 101 / PAO1)</name>
    <dbReference type="NCBI Taxonomy" id="208964"/>
    <lineage>
        <taxon>Bacteria</taxon>
        <taxon>Pseudomonadati</taxon>
        <taxon>Pseudomonadota</taxon>
        <taxon>Gammaproteobacteria</taxon>
        <taxon>Pseudomonadales</taxon>
        <taxon>Pseudomonadaceae</taxon>
        <taxon>Pseudomonas</taxon>
    </lineage>
</organism>
<sequence length="347" mass="37935">MKQQFERSPSESYFWPVVLAVVLHVLIFAMLFVSWAFAPELPPSKPIVQATLYQLKSKSQATTQTNQKIAGEAKKTASKQYEVEQLEQKKLEQQKLEQQKLEQQQVAAAKAAEQKKADEARKAEAQKAAEAKKADEAKKAAEAKAAEQKKQADIAKKRAEDEAKKKAAEDAKKKAAEDAKKKAAEEAKKKAAAEAAKKKAAVEAAKKKAAAAAAAARKAAEDKKARALAELLSDTTERQQALADEVGSEVTGSLDDLIVNLVSQQWRRPPSARNGMSVEVLIEMLPDGTITNASVSRSSGDKPFDSSAVAAVRNVGRIPEMQQLPRATFDSLYRQRRIIFKPEDLSL</sequence>
<gene>
    <name type="primary">tolA</name>
    <name type="ordered locus">PA0971</name>
</gene>